<evidence type="ECO:0000255" key="1">
    <source>
        <dbReference type="HAMAP-Rule" id="MF_00111"/>
    </source>
</evidence>
<feature type="chain" id="PRO_0000178872" description="UDP-N-acetylglucosamine 1-carboxyvinyltransferase">
    <location>
        <begin position="1"/>
        <end position="419"/>
    </location>
</feature>
<feature type="active site" description="Proton donor" evidence="1">
    <location>
        <position position="115"/>
    </location>
</feature>
<feature type="binding site" evidence="1">
    <location>
        <begin position="22"/>
        <end position="23"/>
    </location>
    <ligand>
        <name>phosphoenolpyruvate</name>
        <dbReference type="ChEBI" id="CHEBI:58702"/>
    </ligand>
</feature>
<feature type="binding site" evidence="1">
    <location>
        <position position="91"/>
    </location>
    <ligand>
        <name>UDP-N-acetyl-alpha-D-glucosamine</name>
        <dbReference type="ChEBI" id="CHEBI:57705"/>
    </ligand>
</feature>
<feature type="binding site" evidence="1">
    <location>
        <begin position="120"/>
        <end position="124"/>
    </location>
    <ligand>
        <name>UDP-N-acetyl-alpha-D-glucosamine</name>
        <dbReference type="ChEBI" id="CHEBI:57705"/>
    </ligand>
</feature>
<feature type="binding site" evidence="1">
    <location>
        <begin position="160"/>
        <end position="163"/>
    </location>
    <ligand>
        <name>UDP-N-acetyl-alpha-D-glucosamine</name>
        <dbReference type="ChEBI" id="CHEBI:57705"/>
    </ligand>
</feature>
<feature type="binding site" evidence="1">
    <location>
        <position position="305"/>
    </location>
    <ligand>
        <name>UDP-N-acetyl-alpha-D-glucosamine</name>
        <dbReference type="ChEBI" id="CHEBI:57705"/>
    </ligand>
</feature>
<feature type="binding site" evidence="1">
    <location>
        <position position="327"/>
    </location>
    <ligand>
        <name>UDP-N-acetyl-alpha-D-glucosamine</name>
        <dbReference type="ChEBI" id="CHEBI:57705"/>
    </ligand>
</feature>
<feature type="modified residue" description="2-(S-cysteinyl)pyruvic acid O-phosphothioketal" evidence="1">
    <location>
        <position position="115"/>
    </location>
</feature>
<sequence length="419" mass="44818">MDKFRVQGPTKLQGEVTISGAKNAALPILFAALLAEEPVEIQNVPKLKDVDTSMKLLSQLGAKVERNGSVHIDARDVNVFCAPYDLVKTMRASIWALGPLVARFGQGQVSLPGGCTIGARPVDLHISGLEQLGATIKLEEGYVKASVDGRLKGAHIVMDKVSVGATVTIMCAATLAEGTTIIENAAREPEIVDTANFLITLGAKISGQGTDRIVIEGVERLGGGVYRVLPDRIETGTFLVAAAISRGKIICRNAQPDTLDAVLAKLRDAGADIEVGEDWISLDMHGKRPKAVNVRTAPHPAFPTDMQAQFTLLNLVAEGTGFITETVFENRFMHVPELSRMGAHAEIESNTVICHGVEKLSGAQVMATDLRASASLVLAGCIAEGTTVVDRIYHIDRGYERIEDKLRALGANIERVKGE</sequence>
<organism>
    <name type="scientific">Escherichia coli O6:H1 (strain CFT073 / ATCC 700928 / UPEC)</name>
    <dbReference type="NCBI Taxonomy" id="199310"/>
    <lineage>
        <taxon>Bacteria</taxon>
        <taxon>Pseudomonadati</taxon>
        <taxon>Pseudomonadota</taxon>
        <taxon>Gammaproteobacteria</taxon>
        <taxon>Enterobacterales</taxon>
        <taxon>Enterobacteriaceae</taxon>
        <taxon>Escherichia</taxon>
    </lineage>
</organism>
<proteinExistence type="inferred from homology"/>
<gene>
    <name evidence="1" type="primary">murA</name>
    <name type="synonym">murZ</name>
    <name type="ordered locus">c3947</name>
</gene>
<comment type="function">
    <text evidence="1">Cell wall formation. Adds enolpyruvyl to UDP-N-acetylglucosamine.</text>
</comment>
<comment type="catalytic activity">
    <reaction evidence="1">
        <text>phosphoenolpyruvate + UDP-N-acetyl-alpha-D-glucosamine = UDP-N-acetyl-3-O-(1-carboxyvinyl)-alpha-D-glucosamine + phosphate</text>
        <dbReference type="Rhea" id="RHEA:18681"/>
        <dbReference type="ChEBI" id="CHEBI:43474"/>
        <dbReference type="ChEBI" id="CHEBI:57705"/>
        <dbReference type="ChEBI" id="CHEBI:58702"/>
        <dbReference type="ChEBI" id="CHEBI:68483"/>
        <dbReference type="EC" id="2.5.1.7"/>
    </reaction>
</comment>
<comment type="pathway">
    <text evidence="1">Cell wall biogenesis; peptidoglycan biosynthesis.</text>
</comment>
<comment type="subcellular location">
    <subcellularLocation>
        <location evidence="1">Cytoplasm</location>
    </subcellularLocation>
</comment>
<comment type="similarity">
    <text evidence="1">Belongs to the EPSP synthase family. MurA subfamily.</text>
</comment>
<accession>P0A750</accession>
<accession>P28909</accession>
<keyword id="KW-0131">Cell cycle</keyword>
<keyword id="KW-0132">Cell division</keyword>
<keyword id="KW-0133">Cell shape</keyword>
<keyword id="KW-0961">Cell wall biogenesis/degradation</keyword>
<keyword id="KW-0963">Cytoplasm</keyword>
<keyword id="KW-0573">Peptidoglycan synthesis</keyword>
<keyword id="KW-0670">Pyruvate</keyword>
<keyword id="KW-1185">Reference proteome</keyword>
<keyword id="KW-0808">Transferase</keyword>
<reference key="1">
    <citation type="journal article" date="2002" name="Proc. Natl. Acad. Sci. U.S.A.">
        <title>Extensive mosaic structure revealed by the complete genome sequence of uropathogenic Escherichia coli.</title>
        <authorList>
            <person name="Welch R.A."/>
            <person name="Burland V."/>
            <person name="Plunkett G. III"/>
            <person name="Redford P."/>
            <person name="Roesch P."/>
            <person name="Rasko D."/>
            <person name="Buckles E.L."/>
            <person name="Liou S.-R."/>
            <person name="Boutin A."/>
            <person name="Hackett J."/>
            <person name="Stroud D."/>
            <person name="Mayhew G.F."/>
            <person name="Rose D.J."/>
            <person name="Zhou S."/>
            <person name="Schwartz D.C."/>
            <person name="Perna N.T."/>
            <person name="Mobley H.L.T."/>
            <person name="Donnenberg M.S."/>
            <person name="Blattner F.R."/>
        </authorList>
    </citation>
    <scope>NUCLEOTIDE SEQUENCE [LARGE SCALE GENOMIC DNA]</scope>
    <source>
        <strain>CFT073 / ATCC 700928 / UPEC</strain>
    </source>
</reference>
<dbReference type="EC" id="2.5.1.7" evidence="1"/>
<dbReference type="EMBL" id="AE014075">
    <property type="protein sequence ID" value="AAN82387.1"/>
    <property type="molecule type" value="Genomic_DNA"/>
</dbReference>
<dbReference type="RefSeq" id="WP_000357259.1">
    <property type="nucleotide sequence ID" value="NZ_CP051263.1"/>
</dbReference>
<dbReference type="SMR" id="P0A750"/>
<dbReference type="STRING" id="199310.c3947"/>
<dbReference type="GeneID" id="93778792"/>
<dbReference type="KEGG" id="ecc:c3947"/>
<dbReference type="eggNOG" id="COG0766">
    <property type="taxonomic scope" value="Bacteria"/>
</dbReference>
<dbReference type="HOGENOM" id="CLU_027387_0_0_6"/>
<dbReference type="BioCyc" id="ECOL199310:C3947-MONOMER"/>
<dbReference type="UniPathway" id="UPA00219"/>
<dbReference type="Proteomes" id="UP000001410">
    <property type="component" value="Chromosome"/>
</dbReference>
<dbReference type="GO" id="GO:0005737">
    <property type="term" value="C:cytoplasm"/>
    <property type="evidence" value="ECO:0007669"/>
    <property type="project" value="UniProtKB-SubCell"/>
</dbReference>
<dbReference type="GO" id="GO:0008760">
    <property type="term" value="F:UDP-N-acetylglucosamine 1-carboxyvinyltransferase activity"/>
    <property type="evidence" value="ECO:0007669"/>
    <property type="project" value="UniProtKB-UniRule"/>
</dbReference>
<dbReference type="GO" id="GO:0051301">
    <property type="term" value="P:cell division"/>
    <property type="evidence" value="ECO:0007669"/>
    <property type="project" value="UniProtKB-KW"/>
</dbReference>
<dbReference type="GO" id="GO:0071555">
    <property type="term" value="P:cell wall organization"/>
    <property type="evidence" value="ECO:0007669"/>
    <property type="project" value="UniProtKB-KW"/>
</dbReference>
<dbReference type="GO" id="GO:0009252">
    <property type="term" value="P:peptidoglycan biosynthetic process"/>
    <property type="evidence" value="ECO:0007669"/>
    <property type="project" value="UniProtKB-UniRule"/>
</dbReference>
<dbReference type="GO" id="GO:0008360">
    <property type="term" value="P:regulation of cell shape"/>
    <property type="evidence" value="ECO:0007669"/>
    <property type="project" value="UniProtKB-KW"/>
</dbReference>
<dbReference type="GO" id="GO:0019277">
    <property type="term" value="P:UDP-N-acetylgalactosamine biosynthetic process"/>
    <property type="evidence" value="ECO:0007669"/>
    <property type="project" value="InterPro"/>
</dbReference>
<dbReference type="CDD" id="cd01555">
    <property type="entry name" value="UdpNAET"/>
    <property type="match status" value="1"/>
</dbReference>
<dbReference type="FunFam" id="3.65.10.10:FF:000002">
    <property type="entry name" value="UDP-N-acetylglucosamine 1-carboxyvinyltransferase"/>
    <property type="match status" value="1"/>
</dbReference>
<dbReference type="Gene3D" id="3.65.10.10">
    <property type="entry name" value="Enolpyruvate transferase domain"/>
    <property type="match status" value="2"/>
</dbReference>
<dbReference type="HAMAP" id="MF_00111">
    <property type="entry name" value="MurA"/>
    <property type="match status" value="1"/>
</dbReference>
<dbReference type="InterPro" id="IPR001986">
    <property type="entry name" value="Enolpyruvate_Tfrase_dom"/>
</dbReference>
<dbReference type="InterPro" id="IPR036968">
    <property type="entry name" value="Enolpyruvate_Tfrase_sf"/>
</dbReference>
<dbReference type="InterPro" id="IPR050068">
    <property type="entry name" value="MurA_subfamily"/>
</dbReference>
<dbReference type="InterPro" id="IPR013792">
    <property type="entry name" value="RNA3'P_cycl/enolpyr_Trfase_a/b"/>
</dbReference>
<dbReference type="InterPro" id="IPR005750">
    <property type="entry name" value="UDP_GlcNAc_COvinyl_MurA"/>
</dbReference>
<dbReference type="NCBIfam" id="TIGR01072">
    <property type="entry name" value="murA"/>
    <property type="match status" value="1"/>
</dbReference>
<dbReference type="NCBIfam" id="NF006873">
    <property type="entry name" value="PRK09369.1"/>
    <property type="match status" value="1"/>
</dbReference>
<dbReference type="PANTHER" id="PTHR43783">
    <property type="entry name" value="UDP-N-ACETYLGLUCOSAMINE 1-CARBOXYVINYLTRANSFERASE"/>
    <property type="match status" value="1"/>
</dbReference>
<dbReference type="PANTHER" id="PTHR43783:SF1">
    <property type="entry name" value="UDP-N-ACETYLGLUCOSAMINE 1-CARBOXYVINYLTRANSFERASE"/>
    <property type="match status" value="1"/>
</dbReference>
<dbReference type="Pfam" id="PF00275">
    <property type="entry name" value="EPSP_synthase"/>
    <property type="match status" value="1"/>
</dbReference>
<dbReference type="SUPFAM" id="SSF55205">
    <property type="entry name" value="EPT/RTPC-like"/>
    <property type="match status" value="1"/>
</dbReference>
<name>MURA_ECOL6</name>
<protein>
    <recommendedName>
        <fullName evidence="1">UDP-N-acetylglucosamine 1-carboxyvinyltransferase</fullName>
        <ecNumber evidence="1">2.5.1.7</ecNumber>
    </recommendedName>
    <alternativeName>
        <fullName evidence="1">Enoylpyruvate transferase</fullName>
    </alternativeName>
    <alternativeName>
        <fullName evidence="1">UDP-N-acetylglucosamine enolpyruvyl transferase</fullName>
        <shortName evidence="1">EPT</shortName>
    </alternativeName>
</protein>